<feature type="chain" id="PRO_1000164049" description="Acetyl-coenzyme A synthetase">
    <location>
        <begin position="1"/>
        <end position="653"/>
    </location>
</feature>
<feature type="binding site" evidence="1">
    <location>
        <begin position="196"/>
        <end position="199"/>
    </location>
    <ligand>
        <name>CoA</name>
        <dbReference type="ChEBI" id="CHEBI:57287"/>
    </ligand>
</feature>
<feature type="binding site" evidence="1">
    <location>
        <position position="315"/>
    </location>
    <ligand>
        <name>CoA</name>
        <dbReference type="ChEBI" id="CHEBI:57287"/>
    </ligand>
</feature>
<feature type="binding site" evidence="1">
    <location>
        <begin position="391"/>
        <end position="393"/>
    </location>
    <ligand>
        <name>ATP</name>
        <dbReference type="ChEBI" id="CHEBI:30616"/>
    </ligand>
</feature>
<feature type="binding site" evidence="1">
    <location>
        <begin position="415"/>
        <end position="420"/>
    </location>
    <ligand>
        <name>ATP</name>
        <dbReference type="ChEBI" id="CHEBI:30616"/>
    </ligand>
</feature>
<feature type="binding site" evidence="1">
    <location>
        <position position="506"/>
    </location>
    <ligand>
        <name>ATP</name>
        <dbReference type="ChEBI" id="CHEBI:30616"/>
    </ligand>
</feature>
<feature type="binding site" evidence="1">
    <location>
        <position position="521"/>
    </location>
    <ligand>
        <name>ATP</name>
        <dbReference type="ChEBI" id="CHEBI:30616"/>
    </ligand>
</feature>
<feature type="binding site" evidence="1">
    <location>
        <position position="529"/>
    </location>
    <ligand>
        <name>CoA</name>
        <dbReference type="ChEBI" id="CHEBI:57287"/>
    </ligand>
</feature>
<feature type="binding site" evidence="1">
    <location>
        <position position="532"/>
    </location>
    <ligand>
        <name>ATP</name>
        <dbReference type="ChEBI" id="CHEBI:30616"/>
    </ligand>
</feature>
<feature type="binding site" evidence="1">
    <location>
        <position position="543"/>
    </location>
    <ligand>
        <name>Mg(2+)</name>
        <dbReference type="ChEBI" id="CHEBI:18420"/>
    </ligand>
</feature>
<feature type="binding site" evidence="1">
    <location>
        <position position="548"/>
    </location>
    <ligand>
        <name>Mg(2+)</name>
        <dbReference type="ChEBI" id="CHEBI:18420"/>
    </ligand>
</feature>
<feature type="modified residue" description="N6-acetyllysine" evidence="1">
    <location>
        <position position="618"/>
    </location>
</feature>
<dbReference type="EC" id="6.2.1.1" evidence="1"/>
<dbReference type="EMBL" id="CP001154">
    <property type="protein sequence ID" value="ACO74216.1"/>
    <property type="molecule type" value="Genomic_DNA"/>
</dbReference>
<dbReference type="RefSeq" id="WP_012696703.1">
    <property type="nucleotide sequence ID" value="NC_012559.1"/>
</dbReference>
<dbReference type="SMR" id="C1D6V9"/>
<dbReference type="STRING" id="557598.LHK_01225"/>
<dbReference type="KEGG" id="lhk:LHK_01225"/>
<dbReference type="eggNOG" id="COG0365">
    <property type="taxonomic scope" value="Bacteria"/>
</dbReference>
<dbReference type="HOGENOM" id="CLU_000022_3_6_4"/>
<dbReference type="Proteomes" id="UP000002010">
    <property type="component" value="Chromosome"/>
</dbReference>
<dbReference type="GO" id="GO:0005829">
    <property type="term" value="C:cytosol"/>
    <property type="evidence" value="ECO:0007669"/>
    <property type="project" value="TreeGrafter"/>
</dbReference>
<dbReference type="GO" id="GO:0003987">
    <property type="term" value="F:acetate-CoA ligase activity"/>
    <property type="evidence" value="ECO:0007669"/>
    <property type="project" value="UniProtKB-UniRule"/>
</dbReference>
<dbReference type="GO" id="GO:0016208">
    <property type="term" value="F:AMP binding"/>
    <property type="evidence" value="ECO:0007669"/>
    <property type="project" value="InterPro"/>
</dbReference>
<dbReference type="GO" id="GO:0005524">
    <property type="term" value="F:ATP binding"/>
    <property type="evidence" value="ECO:0007669"/>
    <property type="project" value="UniProtKB-KW"/>
</dbReference>
<dbReference type="GO" id="GO:0046872">
    <property type="term" value="F:metal ion binding"/>
    <property type="evidence" value="ECO:0007669"/>
    <property type="project" value="UniProtKB-KW"/>
</dbReference>
<dbReference type="GO" id="GO:0019427">
    <property type="term" value="P:acetyl-CoA biosynthetic process from acetate"/>
    <property type="evidence" value="ECO:0007669"/>
    <property type="project" value="InterPro"/>
</dbReference>
<dbReference type="CDD" id="cd05966">
    <property type="entry name" value="ACS"/>
    <property type="match status" value="1"/>
</dbReference>
<dbReference type="FunFam" id="3.40.50.12780:FF:000001">
    <property type="entry name" value="Acetyl-coenzyme A synthetase"/>
    <property type="match status" value="1"/>
</dbReference>
<dbReference type="Gene3D" id="3.30.300.30">
    <property type="match status" value="1"/>
</dbReference>
<dbReference type="Gene3D" id="3.40.50.12780">
    <property type="entry name" value="N-terminal domain of ligase-like"/>
    <property type="match status" value="1"/>
</dbReference>
<dbReference type="HAMAP" id="MF_01123">
    <property type="entry name" value="Ac_CoA_synth"/>
    <property type="match status" value="1"/>
</dbReference>
<dbReference type="InterPro" id="IPR011904">
    <property type="entry name" value="Ac_CoA_lig"/>
</dbReference>
<dbReference type="InterPro" id="IPR032387">
    <property type="entry name" value="ACAS_N"/>
</dbReference>
<dbReference type="InterPro" id="IPR025110">
    <property type="entry name" value="AMP-bd_C"/>
</dbReference>
<dbReference type="InterPro" id="IPR045851">
    <property type="entry name" value="AMP-bd_C_sf"/>
</dbReference>
<dbReference type="InterPro" id="IPR020845">
    <property type="entry name" value="AMP-binding_CS"/>
</dbReference>
<dbReference type="InterPro" id="IPR000873">
    <property type="entry name" value="AMP-dep_synth/lig_dom"/>
</dbReference>
<dbReference type="InterPro" id="IPR042099">
    <property type="entry name" value="ANL_N_sf"/>
</dbReference>
<dbReference type="NCBIfam" id="TIGR02188">
    <property type="entry name" value="Ac_CoA_lig_AcsA"/>
    <property type="match status" value="1"/>
</dbReference>
<dbReference type="NCBIfam" id="NF001208">
    <property type="entry name" value="PRK00174.1"/>
    <property type="match status" value="1"/>
</dbReference>
<dbReference type="PANTHER" id="PTHR24095">
    <property type="entry name" value="ACETYL-COENZYME A SYNTHETASE"/>
    <property type="match status" value="1"/>
</dbReference>
<dbReference type="PANTHER" id="PTHR24095:SF14">
    <property type="entry name" value="ACETYL-COENZYME A SYNTHETASE 1"/>
    <property type="match status" value="1"/>
</dbReference>
<dbReference type="Pfam" id="PF16177">
    <property type="entry name" value="ACAS_N"/>
    <property type="match status" value="1"/>
</dbReference>
<dbReference type="Pfam" id="PF00501">
    <property type="entry name" value="AMP-binding"/>
    <property type="match status" value="1"/>
</dbReference>
<dbReference type="Pfam" id="PF13193">
    <property type="entry name" value="AMP-binding_C"/>
    <property type="match status" value="1"/>
</dbReference>
<dbReference type="SUPFAM" id="SSF56801">
    <property type="entry name" value="Acetyl-CoA synthetase-like"/>
    <property type="match status" value="1"/>
</dbReference>
<dbReference type="PROSITE" id="PS00455">
    <property type="entry name" value="AMP_BINDING"/>
    <property type="match status" value="1"/>
</dbReference>
<organism>
    <name type="scientific">Laribacter hongkongensis (strain HLHK9)</name>
    <dbReference type="NCBI Taxonomy" id="557598"/>
    <lineage>
        <taxon>Bacteria</taxon>
        <taxon>Pseudomonadati</taxon>
        <taxon>Pseudomonadota</taxon>
        <taxon>Betaproteobacteria</taxon>
        <taxon>Neisseriales</taxon>
        <taxon>Aquaspirillaceae</taxon>
        <taxon>Laribacter</taxon>
    </lineage>
</organism>
<reference key="1">
    <citation type="journal article" date="2009" name="PLoS Genet.">
        <title>The complete genome and proteome of Laribacter hongkongensis reveal potential mechanisms for adaptations to different temperatures and habitats.</title>
        <authorList>
            <person name="Woo P.C.Y."/>
            <person name="Lau S.K.P."/>
            <person name="Tse H."/>
            <person name="Teng J.L.L."/>
            <person name="Curreem S.O."/>
            <person name="Tsang A.K.L."/>
            <person name="Fan R.Y.Y."/>
            <person name="Wong G.K.M."/>
            <person name="Huang Y."/>
            <person name="Loman N.J."/>
            <person name="Snyder L.A.S."/>
            <person name="Cai J.J."/>
            <person name="Huang J.-D."/>
            <person name="Mak W."/>
            <person name="Pallen M.J."/>
            <person name="Lok S."/>
            <person name="Yuen K.-Y."/>
        </authorList>
    </citation>
    <scope>NUCLEOTIDE SEQUENCE [LARGE SCALE GENOMIC DNA]</scope>
    <source>
        <strain>HLHK9</strain>
    </source>
</reference>
<protein>
    <recommendedName>
        <fullName evidence="1">Acetyl-coenzyme A synthetase</fullName>
        <shortName evidence="1">AcCoA synthetase</shortName>
        <shortName evidence="1">Acs</shortName>
        <ecNumber evidence="1">6.2.1.1</ecNumber>
    </recommendedName>
    <alternativeName>
        <fullName evidence="1">Acetate--CoA ligase</fullName>
    </alternativeName>
    <alternativeName>
        <fullName evidence="1">Acyl-activating enzyme</fullName>
    </alternativeName>
</protein>
<gene>
    <name evidence="1" type="primary">acsA</name>
    <name type="ordered locus">LHK_01225</name>
</gene>
<keyword id="KW-0007">Acetylation</keyword>
<keyword id="KW-0067">ATP-binding</keyword>
<keyword id="KW-0436">Ligase</keyword>
<keyword id="KW-0460">Magnesium</keyword>
<keyword id="KW-0479">Metal-binding</keyword>
<keyword id="KW-0547">Nucleotide-binding</keyword>
<keyword id="KW-1185">Reference proteome</keyword>
<proteinExistence type="inferred from homology"/>
<evidence type="ECO:0000255" key="1">
    <source>
        <dbReference type="HAMAP-Rule" id="MF_01123"/>
    </source>
</evidence>
<name>ACSA_LARHH</name>
<accession>C1D6V9</accession>
<sequence>MSTIESVLKETRSFPPSEAFRQQATVSGMQAYNDLCEKANADYEGFWADLARELLSWKKPFTQVFDGSQAPFFKWFADGQLNVSYNCLDRHLEHNANKTAIIYETDDGQVTPISYRSLYEQVCQFANGLKSLGVGKGDRVVIYMPMVPQAIVAMQACARIGAIHSVVFGGFSAGALRDRIQDAAAKVVITANESVRGGKLVPLKATVDEALAMDGCDSIEKVVVLQRTYTPCSMGARDITWDALTAGQPLECEPEWMSAEDPLFILYTSGSTGKPKGIQHSSAGYLLGAANSFRWAFDYKPNDIYWCTADVGWITGHSYICYGPLAMGATQVVFEGIPTYPDAGRFWRMIEQHKVNIFYTAPTAIRSLIKLGADLPKQFDLSSLRVLGTVGEPINPEAWMWYYEVVGGGRCPIVDTWWQTETGSAMIAPMPGAVATKPGSCTLPLPGIMADIVDESGAQVEPGRGGFLVIKKPFPSLVRTIWNDPDRFKKTYFPEEFNGQYYLAGDSANRDESGYFWIMGRIDDVLNVSGHRLGTMEIESALVANPLVAEAAVVGKPHDVKGEAVVAFVVLKGIRPEGDEAKKVAAELKSWVAHEIGKIAQPDDIRFGENLPKTRSGKIMRRLLRSIAKGEEITQDTSTLENPQILDQLQEIA</sequence>
<comment type="function">
    <text evidence="1">Catalyzes the conversion of acetate into acetyl-CoA (AcCoA), an essential intermediate at the junction of anabolic and catabolic pathways. AcsA undergoes a two-step reaction. In the first half reaction, AcsA combines acetate with ATP to form acetyl-adenylate (AcAMP) intermediate. In the second half reaction, it can then transfer the acetyl group from AcAMP to the sulfhydryl group of CoA, forming the product AcCoA.</text>
</comment>
<comment type="catalytic activity">
    <reaction evidence="1">
        <text>acetate + ATP + CoA = acetyl-CoA + AMP + diphosphate</text>
        <dbReference type="Rhea" id="RHEA:23176"/>
        <dbReference type="ChEBI" id="CHEBI:30089"/>
        <dbReference type="ChEBI" id="CHEBI:30616"/>
        <dbReference type="ChEBI" id="CHEBI:33019"/>
        <dbReference type="ChEBI" id="CHEBI:57287"/>
        <dbReference type="ChEBI" id="CHEBI:57288"/>
        <dbReference type="ChEBI" id="CHEBI:456215"/>
        <dbReference type="EC" id="6.2.1.1"/>
    </reaction>
</comment>
<comment type="cofactor">
    <cofactor evidence="1">
        <name>Mg(2+)</name>
        <dbReference type="ChEBI" id="CHEBI:18420"/>
    </cofactor>
</comment>
<comment type="PTM">
    <text evidence="1">Acetylated. Deacetylation by the SIR2-homolog deacetylase activates the enzyme.</text>
</comment>
<comment type="similarity">
    <text evidence="1">Belongs to the ATP-dependent AMP-binding enzyme family.</text>
</comment>